<reference key="1">
    <citation type="journal article" date="2008" name="PLoS ONE">
        <title>Comparative analysis of Acinetobacters: three genomes for three lifestyles.</title>
        <authorList>
            <person name="Vallenet D."/>
            <person name="Nordmann P."/>
            <person name="Barbe V."/>
            <person name="Poirel L."/>
            <person name="Mangenot S."/>
            <person name="Bataille E."/>
            <person name="Dossat C."/>
            <person name="Gas S."/>
            <person name="Kreimeyer A."/>
            <person name="Lenoble P."/>
            <person name="Oztas S."/>
            <person name="Poulain J."/>
            <person name="Segurens B."/>
            <person name="Robert C."/>
            <person name="Abergel C."/>
            <person name="Claverie J.-M."/>
            <person name="Raoult D."/>
            <person name="Medigue C."/>
            <person name="Weissenbach J."/>
            <person name="Cruveiller S."/>
        </authorList>
    </citation>
    <scope>NUCLEOTIDE SEQUENCE [LARGE SCALE GENOMIC DNA]</scope>
    <source>
        <strain>AYE</strain>
    </source>
</reference>
<protein>
    <recommendedName>
        <fullName evidence="1">Glycine cleavage system H protein</fullName>
    </recommendedName>
</protein>
<gene>
    <name evidence="1" type="primary">gcvH</name>
    <name type="ordered locus">ABAYE2103</name>
</gene>
<name>GCSH_ACIBY</name>
<feature type="chain" id="PRO_1000114493" description="Glycine cleavage system H protein">
    <location>
        <begin position="1"/>
        <end position="124"/>
    </location>
</feature>
<feature type="domain" description="Lipoyl-binding" evidence="2">
    <location>
        <begin position="22"/>
        <end position="104"/>
    </location>
</feature>
<feature type="modified residue" description="N6-lipoyllysine" evidence="1">
    <location>
        <position position="63"/>
    </location>
</feature>
<accession>B0VCZ2</accession>
<organism>
    <name type="scientific">Acinetobacter baumannii (strain AYE)</name>
    <dbReference type="NCBI Taxonomy" id="509173"/>
    <lineage>
        <taxon>Bacteria</taxon>
        <taxon>Pseudomonadati</taxon>
        <taxon>Pseudomonadota</taxon>
        <taxon>Gammaproteobacteria</taxon>
        <taxon>Moraxellales</taxon>
        <taxon>Moraxellaceae</taxon>
        <taxon>Acinetobacter</taxon>
        <taxon>Acinetobacter calcoaceticus/baumannii complex</taxon>
    </lineage>
</organism>
<evidence type="ECO:0000255" key="1">
    <source>
        <dbReference type="HAMAP-Rule" id="MF_00272"/>
    </source>
</evidence>
<evidence type="ECO:0000255" key="2">
    <source>
        <dbReference type="PROSITE-ProRule" id="PRU01066"/>
    </source>
</evidence>
<sequence length="124" mass="13553">MNHPSELKYARTHEWVKIEGDLVITGITDHAQDELGDLVYVETPEVGSQVTAGEQAGVVESVKTASDIHAPVSGTVVEVNTDLEDDPDFVNEDPYGKGWIYKIKPDNIADVEKLLTNAEYEAGL</sequence>
<comment type="function">
    <text evidence="1">The glycine cleavage system catalyzes the degradation of glycine. The H protein shuttles the methylamine group of glycine from the P protein to the T protein.</text>
</comment>
<comment type="cofactor">
    <cofactor evidence="1">
        <name>(R)-lipoate</name>
        <dbReference type="ChEBI" id="CHEBI:83088"/>
    </cofactor>
    <text evidence="1">Binds 1 lipoyl cofactor covalently.</text>
</comment>
<comment type="subunit">
    <text evidence="1">The glycine cleavage system is composed of four proteins: P, T, L and H.</text>
</comment>
<comment type="similarity">
    <text evidence="1">Belongs to the GcvH family.</text>
</comment>
<proteinExistence type="inferred from homology"/>
<dbReference type="EMBL" id="CU459141">
    <property type="protein sequence ID" value="CAM86977.1"/>
    <property type="molecule type" value="Genomic_DNA"/>
</dbReference>
<dbReference type="RefSeq" id="WP_001016343.1">
    <property type="nucleotide sequence ID" value="NZ_JBDGFB010000001.1"/>
</dbReference>
<dbReference type="SMR" id="B0VCZ2"/>
<dbReference type="EnsemblBacteria" id="CAM86977">
    <property type="protein sequence ID" value="CAM86977"/>
    <property type="gene ID" value="ABAYE2103"/>
</dbReference>
<dbReference type="GeneID" id="92893760"/>
<dbReference type="KEGG" id="aby:ABAYE2103"/>
<dbReference type="HOGENOM" id="CLU_097408_2_0_6"/>
<dbReference type="GO" id="GO:0005829">
    <property type="term" value="C:cytosol"/>
    <property type="evidence" value="ECO:0007669"/>
    <property type="project" value="TreeGrafter"/>
</dbReference>
<dbReference type="GO" id="GO:0005960">
    <property type="term" value="C:glycine cleavage complex"/>
    <property type="evidence" value="ECO:0007669"/>
    <property type="project" value="InterPro"/>
</dbReference>
<dbReference type="GO" id="GO:0019464">
    <property type="term" value="P:glycine decarboxylation via glycine cleavage system"/>
    <property type="evidence" value="ECO:0007669"/>
    <property type="project" value="UniProtKB-UniRule"/>
</dbReference>
<dbReference type="CDD" id="cd06848">
    <property type="entry name" value="GCS_H"/>
    <property type="match status" value="1"/>
</dbReference>
<dbReference type="Gene3D" id="2.40.50.100">
    <property type="match status" value="1"/>
</dbReference>
<dbReference type="HAMAP" id="MF_00272">
    <property type="entry name" value="GcvH"/>
    <property type="match status" value="1"/>
</dbReference>
<dbReference type="InterPro" id="IPR003016">
    <property type="entry name" value="2-oxoA_DH_lipoyl-BS"/>
</dbReference>
<dbReference type="InterPro" id="IPR000089">
    <property type="entry name" value="Biotin_lipoyl"/>
</dbReference>
<dbReference type="InterPro" id="IPR002930">
    <property type="entry name" value="GCV_H"/>
</dbReference>
<dbReference type="InterPro" id="IPR033753">
    <property type="entry name" value="GCV_H/Fam206"/>
</dbReference>
<dbReference type="InterPro" id="IPR017453">
    <property type="entry name" value="GCV_H_sub"/>
</dbReference>
<dbReference type="InterPro" id="IPR011053">
    <property type="entry name" value="Single_hybrid_motif"/>
</dbReference>
<dbReference type="NCBIfam" id="TIGR00527">
    <property type="entry name" value="gcvH"/>
    <property type="match status" value="1"/>
</dbReference>
<dbReference type="NCBIfam" id="NF002270">
    <property type="entry name" value="PRK01202.1"/>
    <property type="match status" value="1"/>
</dbReference>
<dbReference type="PANTHER" id="PTHR11715">
    <property type="entry name" value="GLYCINE CLEAVAGE SYSTEM H PROTEIN"/>
    <property type="match status" value="1"/>
</dbReference>
<dbReference type="PANTHER" id="PTHR11715:SF3">
    <property type="entry name" value="GLYCINE CLEAVAGE SYSTEM H PROTEIN-RELATED"/>
    <property type="match status" value="1"/>
</dbReference>
<dbReference type="Pfam" id="PF01597">
    <property type="entry name" value="GCV_H"/>
    <property type="match status" value="1"/>
</dbReference>
<dbReference type="SUPFAM" id="SSF51230">
    <property type="entry name" value="Single hybrid motif"/>
    <property type="match status" value="1"/>
</dbReference>
<dbReference type="PROSITE" id="PS50968">
    <property type="entry name" value="BIOTINYL_LIPOYL"/>
    <property type="match status" value="1"/>
</dbReference>
<dbReference type="PROSITE" id="PS00189">
    <property type="entry name" value="LIPOYL"/>
    <property type="match status" value="1"/>
</dbReference>
<keyword id="KW-0450">Lipoyl</keyword>